<protein>
    <recommendedName>
        <fullName>DNA replication licensing factor MCM6</fullName>
        <ecNumber>3.6.4.12</ecNumber>
    </recommendedName>
    <alternativeName>
        <fullName>Minichromosome maintenance protein 6</fullName>
    </alternativeName>
</protein>
<feature type="chain" id="PRO_0000425998" description="DNA replication licensing factor MCM6">
    <location>
        <begin position="1"/>
        <end position="830"/>
    </location>
</feature>
<feature type="domain" description="MCM">
    <location>
        <begin position="349"/>
        <end position="555"/>
    </location>
</feature>
<feature type="zinc finger region" description="C4-type" evidence="2">
    <location>
        <begin position="159"/>
        <end position="186"/>
    </location>
</feature>
<feature type="region of interest" description="Disordered" evidence="3">
    <location>
        <begin position="671"/>
        <end position="710"/>
    </location>
</feature>
<feature type="short sequence motif" description="Arginine finger">
    <location>
        <begin position="531"/>
        <end position="534"/>
    </location>
</feature>
<feature type="binding site" evidence="1">
    <location>
        <begin position="399"/>
        <end position="406"/>
    </location>
    <ligand>
        <name>ATP</name>
        <dbReference type="ChEBI" id="CHEBI:30616"/>
    </ligand>
</feature>
<comment type="function">
    <text evidence="1">Probable component of the MCM2-7 complex (MCM complex) that may function as a DNA helicase and which is essential to undergo a single round of replication initiation and elongation per cell cycle in eukaryotic cells.</text>
</comment>
<comment type="catalytic activity">
    <reaction>
        <text>ATP + H2O = ADP + phosphate + H(+)</text>
        <dbReference type="Rhea" id="RHEA:13065"/>
        <dbReference type="ChEBI" id="CHEBI:15377"/>
        <dbReference type="ChEBI" id="CHEBI:15378"/>
        <dbReference type="ChEBI" id="CHEBI:30616"/>
        <dbReference type="ChEBI" id="CHEBI:43474"/>
        <dbReference type="ChEBI" id="CHEBI:456216"/>
        <dbReference type="EC" id="3.6.4.12"/>
    </reaction>
</comment>
<comment type="subunit">
    <text evidence="1">Component of the minichromosome maintenance (MCM) complex, a heterotetramer composed of MCM2, MCM3, MCM4, MCM5, MCM6 and MCM7.</text>
</comment>
<comment type="subcellular location">
    <subcellularLocation>
        <location evidence="4">Nucleus</location>
    </subcellularLocation>
</comment>
<comment type="similarity">
    <text evidence="4">Belongs to the MCM family.</text>
</comment>
<reference key="1">
    <citation type="journal article" date="2005" name="PLoS Biol.">
        <title>The genomes of Oryza sativa: a history of duplications.</title>
        <authorList>
            <person name="Yu J."/>
            <person name="Wang J."/>
            <person name="Lin W."/>
            <person name="Li S."/>
            <person name="Li H."/>
            <person name="Zhou J."/>
            <person name="Ni P."/>
            <person name="Dong W."/>
            <person name="Hu S."/>
            <person name="Zeng C."/>
            <person name="Zhang J."/>
            <person name="Zhang Y."/>
            <person name="Li R."/>
            <person name="Xu Z."/>
            <person name="Li S."/>
            <person name="Li X."/>
            <person name="Zheng H."/>
            <person name="Cong L."/>
            <person name="Lin L."/>
            <person name="Yin J."/>
            <person name="Geng J."/>
            <person name="Li G."/>
            <person name="Shi J."/>
            <person name="Liu J."/>
            <person name="Lv H."/>
            <person name="Li J."/>
            <person name="Wang J."/>
            <person name="Deng Y."/>
            <person name="Ran L."/>
            <person name="Shi X."/>
            <person name="Wang X."/>
            <person name="Wu Q."/>
            <person name="Li C."/>
            <person name="Ren X."/>
            <person name="Wang J."/>
            <person name="Wang X."/>
            <person name="Li D."/>
            <person name="Liu D."/>
            <person name="Zhang X."/>
            <person name="Ji Z."/>
            <person name="Zhao W."/>
            <person name="Sun Y."/>
            <person name="Zhang Z."/>
            <person name="Bao J."/>
            <person name="Han Y."/>
            <person name="Dong L."/>
            <person name="Ji J."/>
            <person name="Chen P."/>
            <person name="Wu S."/>
            <person name="Liu J."/>
            <person name="Xiao Y."/>
            <person name="Bu D."/>
            <person name="Tan J."/>
            <person name="Yang L."/>
            <person name="Ye C."/>
            <person name="Zhang J."/>
            <person name="Xu J."/>
            <person name="Zhou Y."/>
            <person name="Yu Y."/>
            <person name="Zhang B."/>
            <person name="Zhuang S."/>
            <person name="Wei H."/>
            <person name="Liu B."/>
            <person name="Lei M."/>
            <person name="Yu H."/>
            <person name="Li Y."/>
            <person name="Xu H."/>
            <person name="Wei S."/>
            <person name="He X."/>
            <person name="Fang L."/>
            <person name="Zhang Z."/>
            <person name="Zhang Y."/>
            <person name="Huang X."/>
            <person name="Su Z."/>
            <person name="Tong W."/>
            <person name="Li J."/>
            <person name="Tong Z."/>
            <person name="Li S."/>
            <person name="Ye J."/>
            <person name="Wang L."/>
            <person name="Fang L."/>
            <person name="Lei T."/>
            <person name="Chen C.-S."/>
            <person name="Chen H.-C."/>
            <person name="Xu Z."/>
            <person name="Li H."/>
            <person name="Huang H."/>
            <person name="Zhang F."/>
            <person name="Xu H."/>
            <person name="Li N."/>
            <person name="Zhao C."/>
            <person name="Li S."/>
            <person name="Dong L."/>
            <person name="Huang Y."/>
            <person name="Li L."/>
            <person name="Xi Y."/>
            <person name="Qi Q."/>
            <person name="Li W."/>
            <person name="Zhang B."/>
            <person name="Hu W."/>
            <person name="Zhang Y."/>
            <person name="Tian X."/>
            <person name="Jiao Y."/>
            <person name="Liang X."/>
            <person name="Jin J."/>
            <person name="Gao L."/>
            <person name="Zheng W."/>
            <person name="Hao B."/>
            <person name="Liu S.-M."/>
            <person name="Wang W."/>
            <person name="Yuan L."/>
            <person name="Cao M."/>
            <person name="McDermott J."/>
            <person name="Samudrala R."/>
            <person name="Wang J."/>
            <person name="Wong G.K.-S."/>
            <person name="Yang H."/>
        </authorList>
    </citation>
    <scope>NUCLEOTIDE SEQUENCE [LARGE SCALE GENOMIC DNA]</scope>
    <source>
        <strain>cv. 93-11</strain>
    </source>
</reference>
<accession>B8AZX3</accession>
<dbReference type="EC" id="3.6.4.12"/>
<dbReference type="EMBL" id="CM000130">
    <property type="protein sequence ID" value="EEC78811.1"/>
    <property type="molecule type" value="Genomic_DNA"/>
</dbReference>
<dbReference type="SMR" id="B8AZX3"/>
<dbReference type="STRING" id="39946.B8AZX3"/>
<dbReference type="EnsemblPlants" id="BGIOSGA019443-TA">
    <property type="protein sequence ID" value="BGIOSGA019443-PA"/>
    <property type="gene ID" value="BGIOSGA019443"/>
</dbReference>
<dbReference type="Gramene" id="BGIOSGA019443-TA">
    <property type="protein sequence ID" value="BGIOSGA019443-PA"/>
    <property type="gene ID" value="BGIOSGA019443"/>
</dbReference>
<dbReference type="HOGENOM" id="CLU_000995_3_2_1"/>
<dbReference type="OMA" id="RHQQTDK"/>
<dbReference type="Proteomes" id="UP000007015">
    <property type="component" value="Chromosome 5"/>
</dbReference>
<dbReference type="GO" id="GO:0042555">
    <property type="term" value="C:MCM complex"/>
    <property type="evidence" value="ECO:0007669"/>
    <property type="project" value="InterPro"/>
</dbReference>
<dbReference type="GO" id="GO:0005634">
    <property type="term" value="C:nucleus"/>
    <property type="evidence" value="ECO:0007669"/>
    <property type="project" value="UniProtKB-SubCell"/>
</dbReference>
<dbReference type="GO" id="GO:0005524">
    <property type="term" value="F:ATP binding"/>
    <property type="evidence" value="ECO:0007669"/>
    <property type="project" value="UniProtKB-KW"/>
</dbReference>
<dbReference type="GO" id="GO:0016887">
    <property type="term" value="F:ATP hydrolysis activity"/>
    <property type="evidence" value="ECO:0007669"/>
    <property type="project" value="RHEA"/>
</dbReference>
<dbReference type="GO" id="GO:1990518">
    <property type="term" value="F:single-stranded 3'-5' DNA helicase activity"/>
    <property type="evidence" value="ECO:0007669"/>
    <property type="project" value="TreeGrafter"/>
</dbReference>
<dbReference type="GO" id="GO:0003697">
    <property type="term" value="F:single-stranded DNA binding"/>
    <property type="evidence" value="ECO:0007669"/>
    <property type="project" value="TreeGrafter"/>
</dbReference>
<dbReference type="GO" id="GO:0008270">
    <property type="term" value="F:zinc ion binding"/>
    <property type="evidence" value="ECO:0007669"/>
    <property type="project" value="UniProtKB-KW"/>
</dbReference>
<dbReference type="GO" id="GO:0006270">
    <property type="term" value="P:DNA replication initiation"/>
    <property type="evidence" value="ECO:0007669"/>
    <property type="project" value="InterPro"/>
</dbReference>
<dbReference type="GO" id="GO:0000727">
    <property type="term" value="P:double-strand break repair via break-induced replication"/>
    <property type="evidence" value="ECO:0007669"/>
    <property type="project" value="TreeGrafter"/>
</dbReference>
<dbReference type="GO" id="GO:1902969">
    <property type="term" value="P:mitotic DNA replication"/>
    <property type="evidence" value="ECO:0007669"/>
    <property type="project" value="TreeGrafter"/>
</dbReference>
<dbReference type="CDD" id="cd17757">
    <property type="entry name" value="MCM6"/>
    <property type="match status" value="1"/>
</dbReference>
<dbReference type="FunFam" id="1.20.58.870:FF:000003">
    <property type="entry name" value="DNA helicase"/>
    <property type="match status" value="1"/>
</dbReference>
<dbReference type="FunFam" id="2.20.28.10:FF:000003">
    <property type="entry name" value="DNA helicase"/>
    <property type="match status" value="1"/>
</dbReference>
<dbReference type="FunFam" id="3.30.1640.10:FF:000014">
    <property type="entry name" value="DNA helicase"/>
    <property type="match status" value="1"/>
</dbReference>
<dbReference type="FunFam" id="3.40.50.300:FF:000115">
    <property type="entry name" value="DNA helicase"/>
    <property type="match status" value="1"/>
</dbReference>
<dbReference type="Gene3D" id="1.20.58.870">
    <property type="match status" value="1"/>
</dbReference>
<dbReference type="Gene3D" id="2.20.28.10">
    <property type="match status" value="1"/>
</dbReference>
<dbReference type="Gene3D" id="3.30.1640.10">
    <property type="entry name" value="mini-chromosome maintenance (MCM) complex, chain A, domain 1"/>
    <property type="match status" value="1"/>
</dbReference>
<dbReference type="Gene3D" id="2.40.50.140">
    <property type="entry name" value="Nucleic acid-binding proteins"/>
    <property type="match status" value="1"/>
</dbReference>
<dbReference type="Gene3D" id="3.40.50.300">
    <property type="entry name" value="P-loop containing nucleotide triphosphate hydrolases"/>
    <property type="match status" value="1"/>
</dbReference>
<dbReference type="InterPro" id="IPR031327">
    <property type="entry name" value="MCM"/>
</dbReference>
<dbReference type="InterPro" id="IPR008049">
    <property type="entry name" value="MCM6"/>
</dbReference>
<dbReference type="InterPro" id="IPR041024">
    <property type="entry name" value="Mcm6_C"/>
</dbReference>
<dbReference type="InterPro" id="IPR018525">
    <property type="entry name" value="MCM_CS"/>
</dbReference>
<dbReference type="InterPro" id="IPR001208">
    <property type="entry name" value="MCM_dom"/>
</dbReference>
<dbReference type="InterPro" id="IPR041562">
    <property type="entry name" value="MCM_lid"/>
</dbReference>
<dbReference type="InterPro" id="IPR027925">
    <property type="entry name" value="MCM_N"/>
</dbReference>
<dbReference type="InterPro" id="IPR033762">
    <property type="entry name" value="MCM_OB"/>
</dbReference>
<dbReference type="InterPro" id="IPR012340">
    <property type="entry name" value="NA-bd_OB-fold"/>
</dbReference>
<dbReference type="InterPro" id="IPR027417">
    <property type="entry name" value="P-loop_NTPase"/>
</dbReference>
<dbReference type="PANTHER" id="PTHR11630">
    <property type="entry name" value="DNA REPLICATION LICENSING FACTOR MCM FAMILY MEMBER"/>
    <property type="match status" value="1"/>
</dbReference>
<dbReference type="PANTHER" id="PTHR11630:SF43">
    <property type="entry name" value="DNA REPLICATION LICENSING FACTOR MCM6"/>
    <property type="match status" value="1"/>
</dbReference>
<dbReference type="Pfam" id="PF00493">
    <property type="entry name" value="MCM"/>
    <property type="match status" value="1"/>
</dbReference>
<dbReference type="Pfam" id="PF18263">
    <property type="entry name" value="MCM6_C"/>
    <property type="match status" value="1"/>
</dbReference>
<dbReference type="Pfam" id="PF17855">
    <property type="entry name" value="MCM_lid"/>
    <property type="match status" value="1"/>
</dbReference>
<dbReference type="Pfam" id="PF14551">
    <property type="entry name" value="MCM_N"/>
    <property type="match status" value="1"/>
</dbReference>
<dbReference type="Pfam" id="PF17207">
    <property type="entry name" value="MCM_OB"/>
    <property type="match status" value="1"/>
</dbReference>
<dbReference type="PRINTS" id="PR01657">
    <property type="entry name" value="MCMFAMILY"/>
</dbReference>
<dbReference type="PRINTS" id="PR01662">
    <property type="entry name" value="MCMPROTEIN6"/>
</dbReference>
<dbReference type="SMART" id="SM00350">
    <property type="entry name" value="MCM"/>
    <property type="match status" value="1"/>
</dbReference>
<dbReference type="SUPFAM" id="SSF50249">
    <property type="entry name" value="Nucleic acid-binding proteins"/>
    <property type="match status" value="1"/>
</dbReference>
<dbReference type="SUPFAM" id="SSF52540">
    <property type="entry name" value="P-loop containing nucleoside triphosphate hydrolases"/>
    <property type="match status" value="1"/>
</dbReference>
<dbReference type="PROSITE" id="PS00847">
    <property type="entry name" value="MCM_1"/>
    <property type="match status" value="1"/>
</dbReference>
<dbReference type="PROSITE" id="PS50051">
    <property type="entry name" value="MCM_2"/>
    <property type="match status" value="1"/>
</dbReference>
<name>MCM6_ORYSI</name>
<evidence type="ECO:0000250" key="1"/>
<evidence type="ECO:0000255" key="2"/>
<evidence type="ECO:0000256" key="3">
    <source>
        <dbReference type="SAM" id="MobiDB-lite"/>
    </source>
</evidence>
<evidence type="ECO:0000305" key="4"/>
<sequence>MEAFGGFFVDEKAARVENIFLEFLRRFKEADAAEAFYETELEAMRSRESTTMYVDFAHVMRFNDVLQKAISEEYLRFEPYLRNACKRFVMEQRTGENRAPIISDDSPNKDINIAFYNIPMLKRLRELGTAEIGKLTAVMGVVTRTSEVRPELLQGTFKCLDCGNVVKNVEQQFKYTEPIICVNATCQNRSKWALLRQESKFTDWQRVRMQETSKEIPAGSLPRSLDVILRHEIVEKARAGDTVIFTGTVAAVPDVMALTSPGERAECRREAPQRKNGSGVQEGVKGLKSLGVRDLSYRLAFVANSVQVADGRREVDIRDRDIDGDDSERQKFTEEEEDEVVRMRNVPDFFNKIVDSICPTVFGHQEIKRAILLMLLGGVHKITHEGINLRGDINVCIVGDPSCAKSQFLKYTAGIVPRSVYTSGKSSSAAGLTATVAKEPETGEFCIEAGALMLADNGICCIDEFDKMDIKDQVAIHEAMEQQTISITKAGIQATLNARTSILAAANPTGGRYDKSKPLKYNVALPPAILSRFDLVYIMIDEPDENTDYHIAHHIVRVHQKREEALAPAFSTAELKRYIAFAKSLKPQLSSEAKKVLVESYVTLRRGDSTPGTRVAYRMTVRQLEALIRLSEAIARSHLERVVLPAHVRMAVKLLKTSIISVESSEVDLSDFQDADDGTNVPADNDAGQPTEMDAAPQQDGPENEQAADTGKKKLVITEEHFQRVTQALVMRLRQHEESVTKDGDGLAGMKQGDLIIWYVEQQNAQGAYSSTAEVKEEVKCIKAIIERLIQRDGHLIVIDEGAAPAADDGAARRTSESRILAVNPNYVID</sequence>
<organism>
    <name type="scientific">Oryza sativa subsp. indica</name>
    <name type="common">Rice</name>
    <dbReference type="NCBI Taxonomy" id="39946"/>
    <lineage>
        <taxon>Eukaryota</taxon>
        <taxon>Viridiplantae</taxon>
        <taxon>Streptophyta</taxon>
        <taxon>Embryophyta</taxon>
        <taxon>Tracheophyta</taxon>
        <taxon>Spermatophyta</taxon>
        <taxon>Magnoliopsida</taxon>
        <taxon>Liliopsida</taxon>
        <taxon>Poales</taxon>
        <taxon>Poaceae</taxon>
        <taxon>BOP clade</taxon>
        <taxon>Oryzoideae</taxon>
        <taxon>Oryzeae</taxon>
        <taxon>Oryzinae</taxon>
        <taxon>Oryza</taxon>
        <taxon>Oryza sativa</taxon>
    </lineage>
</organism>
<proteinExistence type="inferred from homology"/>
<gene>
    <name type="primary">MCM6</name>
    <name type="ORF">OsI_19080</name>
</gene>
<keyword id="KW-0067">ATP-binding</keyword>
<keyword id="KW-0131">Cell cycle</keyword>
<keyword id="KW-0235">DNA replication</keyword>
<keyword id="KW-0238">DNA-binding</keyword>
<keyword id="KW-0347">Helicase</keyword>
<keyword id="KW-0378">Hydrolase</keyword>
<keyword id="KW-0479">Metal-binding</keyword>
<keyword id="KW-0547">Nucleotide-binding</keyword>
<keyword id="KW-0539">Nucleus</keyword>
<keyword id="KW-1185">Reference proteome</keyword>
<keyword id="KW-0862">Zinc</keyword>
<keyword id="KW-0863">Zinc-finger</keyword>